<protein>
    <recommendedName>
        <fullName>Germin-like protein 12-1</fullName>
    </recommendedName>
</protein>
<proteinExistence type="evidence at transcript level"/>
<keyword id="KW-0052">Apoplast</keyword>
<keyword id="KW-1015">Disulfide bond</keyword>
<keyword id="KW-0325">Glycoprotein</keyword>
<keyword id="KW-0464">Manganese</keyword>
<keyword id="KW-0479">Metal-binding</keyword>
<keyword id="KW-1185">Reference proteome</keyword>
<keyword id="KW-0964">Secreted</keyword>
<keyword id="KW-0732">Signal</keyword>
<sequence>MASSNFFLPTALIALVATQAMAFDPSPLQDFCVADRNSPVRVNGFPCKDAKDVNVDDFFLEANLDKPMDTTKSKAGSNVTLINVMKLTGLNTLGISMARIDYAPKGQNPPHTHPRATEILTVFEGTLYVGFVTSNQANGENKLFTKTLNKGDVFVFPQGLIHFQFNPSYDKPAVAIAALSSQNPGAITIANAVFGSNPPISDDVLAKAFQVDKKAVDWLQAQFWENNHN</sequence>
<reference key="1">
    <citation type="journal article" date="2005" name="BMC Biol.">
        <title>The sequence of rice chromosomes 11 and 12, rich in disease resistance genes and recent gene duplications.</title>
        <authorList>
            <consortium name="The rice chromosomes 11 and 12 sequencing consortia"/>
        </authorList>
    </citation>
    <scope>NUCLEOTIDE SEQUENCE [LARGE SCALE GENOMIC DNA]</scope>
    <source>
        <strain>cv. Nipponbare</strain>
    </source>
</reference>
<reference key="2">
    <citation type="journal article" date="2005" name="Nature">
        <title>The map-based sequence of the rice genome.</title>
        <authorList>
            <consortium name="International rice genome sequencing project (IRGSP)"/>
        </authorList>
    </citation>
    <scope>NUCLEOTIDE SEQUENCE [LARGE SCALE GENOMIC DNA]</scope>
    <source>
        <strain>cv. Nipponbare</strain>
    </source>
</reference>
<reference key="3">
    <citation type="journal article" date="2008" name="Nucleic Acids Res.">
        <title>The rice annotation project database (RAP-DB): 2008 update.</title>
        <authorList>
            <consortium name="The rice annotation project (RAP)"/>
        </authorList>
    </citation>
    <scope>GENOME REANNOTATION</scope>
    <source>
        <strain>cv. Nipponbare</strain>
    </source>
</reference>
<reference key="4">
    <citation type="journal article" date="2013" name="Rice">
        <title>Improvement of the Oryza sativa Nipponbare reference genome using next generation sequence and optical map data.</title>
        <authorList>
            <person name="Kawahara Y."/>
            <person name="de la Bastide M."/>
            <person name="Hamilton J.P."/>
            <person name="Kanamori H."/>
            <person name="McCombie W.R."/>
            <person name="Ouyang S."/>
            <person name="Schwartz D.C."/>
            <person name="Tanaka T."/>
            <person name="Wu J."/>
            <person name="Zhou S."/>
            <person name="Childs K.L."/>
            <person name="Davidson R.M."/>
            <person name="Lin H."/>
            <person name="Quesada-Ocampo L."/>
            <person name="Vaillancourt B."/>
            <person name="Sakai H."/>
            <person name="Lee S.S."/>
            <person name="Kim J."/>
            <person name="Numa H."/>
            <person name="Itoh T."/>
            <person name="Buell C.R."/>
            <person name="Matsumoto T."/>
        </authorList>
    </citation>
    <scope>GENOME REANNOTATION</scope>
    <source>
        <strain>cv. Nipponbare</strain>
    </source>
</reference>
<reference key="5">
    <citation type="journal article" date="2005" name="PLoS Biol.">
        <title>The genomes of Oryza sativa: a history of duplications.</title>
        <authorList>
            <person name="Yu J."/>
            <person name="Wang J."/>
            <person name="Lin W."/>
            <person name="Li S."/>
            <person name="Li H."/>
            <person name="Zhou J."/>
            <person name="Ni P."/>
            <person name="Dong W."/>
            <person name="Hu S."/>
            <person name="Zeng C."/>
            <person name="Zhang J."/>
            <person name="Zhang Y."/>
            <person name="Li R."/>
            <person name="Xu Z."/>
            <person name="Li S."/>
            <person name="Li X."/>
            <person name="Zheng H."/>
            <person name="Cong L."/>
            <person name="Lin L."/>
            <person name="Yin J."/>
            <person name="Geng J."/>
            <person name="Li G."/>
            <person name="Shi J."/>
            <person name="Liu J."/>
            <person name="Lv H."/>
            <person name="Li J."/>
            <person name="Wang J."/>
            <person name="Deng Y."/>
            <person name="Ran L."/>
            <person name="Shi X."/>
            <person name="Wang X."/>
            <person name="Wu Q."/>
            <person name="Li C."/>
            <person name="Ren X."/>
            <person name="Wang J."/>
            <person name="Wang X."/>
            <person name="Li D."/>
            <person name="Liu D."/>
            <person name="Zhang X."/>
            <person name="Ji Z."/>
            <person name="Zhao W."/>
            <person name="Sun Y."/>
            <person name="Zhang Z."/>
            <person name="Bao J."/>
            <person name="Han Y."/>
            <person name="Dong L."/>
            <person name="Ji J."/>
            <person name="Chen P."/>
            <person name="Wu S."/>
            <person name="Liu J."/>
            <person name="Xiao Y."/>
            <person name="Bu D."/>
            <person name="Tan J."/>
            <person name="Yang L."/>
            <person name="Ye C."/>
            <person name="Zhang J."/>
            <person name="Xu J."/>
            <person name="Zhou Y."/>
            <person name="Yu Y."/>
            <person name="Zhang B."/>
            <person name="Zhuang S."/>
            <person name="Wei H."/>
            <person name="Liu B."/>
            <person name="Lei M."/>
            <person name="Yu H."/>
            <person name="Li Y."/>
            <person name="Xu H."/>
            <person name="Wei S."/>
            <person name="He X."/>
            <person name="Fang L."/>
            <person name="Zhang Z."/>
            <person name="Zhang Y."/>
            <person name="Huang X."/>
            <person name="Su Z."/>
            <person name="Tong W."/>
            <person name="Li J."/>
            <person name="Tong Z."/>
            <person name="Li S."/>
            <person name="Ye J."/>
            <person name="Wang L."/>
            <person name="Fang L."/>
            <person name="Lei T."/>
            <person name="Chen C.-S."/>
            <person name="Chen H.-C."/>
            <person name="Xu Z."/>
            <person name="Li H."/>
            <person name="Huang H."/>
            <person name="Zhang F."/>
            <person name="Xu H."/>
            <person name="Li N."/>
            <person name="Zhao C."/>
            <person name="Li S."/>
            <person name="Dong L."/>
            <person name="Huang Y."/>
            <person name="Li L."/>
            <person name="Xi Y."/>
            <person name="Qi Q."/>
            <person name="Li W."/>
            <person name="Zhang B."/>
            <person name="Hu W."/>
            <person name="Zhang Y."/>
            <person name="Tian X."/>
            <person name="Jiao Y."/>
            <person name="Liang X."/>
            <person name="Jin J."/>
            <person name="Gao L."/>
            <person name="Zheng W."/>
            <person name="Hao B."/>
            <person name="Liu S.-M."/>
            <person name="Wang W."/>
            <person name="Yuan L."/>
            <person name="Cao M."/>
            <person name="McDermott J."/>
            <person name="Samudrala R."/>
            <person name="Wang J."/>
            <person name="Wong G.K.-S."/>
            <person name="Yang H."/>
        </authorList>
    </citation>
    <scope>NUCLEOTIDE SEQUENCE [LARGE SCALE GENOMIC DNA]</scope>
    <source>
        <strain>cv. Nipponbare</strain>
    </source>
</reference>
<reference key="6">
    <citation type="journal article" date="2003" name="Science">
        <title>Collection, mapping, and annotation of over 28,000 cDNA clones from japonica rice.</title>
        <authorList>
            <consortium name="The rice full-length cDNA consortium"/>
        </authorList>
    </citation>
    <scope>NUCLEOTIDE SEQUENCE [LARGE SCALE MRNA]</scope>
    <source>
        <strain>cv. Nipponbare</strain>
    </source>
</reference>
<accession>Q2QXJ4</accession>
<accession>A0A0P0Y7P2</accession>
<comment type="function">
    <text>May play a role in plant defense. Probably has no oxalate oxidase activity even if the active site is conserved.</text>
</comment>
<comment type="subunit">
    <text evidence="1">Oligomer (believed to be a pentamer but probably hexamer).</text>
</comment>
<comment type="subcellular location">
    <subcellularLocation>
        <location evidence="1">Secreted</location>
        <location evidence="1">Extracellular space</location>
        <location evidence="1">Apoplast</location>
    </subcellularLocation>
</comment>
<comment type="similarity">
    <text evidence="3">Belongs to the germin family.</text>
</comment>
<evidence type="ECO:0000250" key="1"/>
<evidence type="ECO:0000255" key="2"/>
<evidence type="ECO:0000305" key="3"/>
<dbReference type="EMBL" id="DP000011">
    <property type="protein sequence ID" value="ABA95854.1"/>
    <property type="molecule type" value="Genomic_DNA"/>
</dbReference>
<dbReference type="EMBL" id="AP008218">
    <property type="protein sequence ID" value="BAF29207.1"/>
    <property type="molecule type" value="Genomic_DNA"/>
</dbReference>
<dbReference type="EMBL" id="AP014968">
    <property type="protein sequence ID" value="BAT15941.1"/>
    <property type="molecule type" value="Genomic_DNA"/>
</dbReference>
<dbReference type="EMBL" id="CM000149">
    <property type="protein sequence ID" value="EAZ19688.1"/>
    <property type="molecule type" value="Genomic_DNA"/>
</dbReference>
<dbReference type="EMBL" id="AK063013">
    <property type="protein sequence ID" value="BAG88518.1"/>
    <property type="molecule type" value="mRNA"/>
</dbReference>
<dbReference type="RefSeq" id="XP_015619653.1">
    <property type="nucleotide sequence ID" value="XM_015764167.1"/>
</dbReference>
<dbReference type="SMR" id="Q2QXJ4"/>
<dbReference type="FunCoup" id="Q2QXJ4">
    <property type="interactions" value="40"/>
</dbReference>
<dbReference type="STRING" id="39947.Q2QXJ4"/>
<dbReference type="PaxDb" id="39947-Q2QXJ4"/>
<dbReference type="EnsemblPlants" id="Os12t0154700-01">
    <property type="protein sequence ID" value="Os12t0154700-01"/>
    <property type="gene ID" value="Os12g0154700"/>
</dbReference>
<dbReference type="Gramene" id="Os12t0154700-01">
    <property type="protein sequence ID" value="Os12t0154700-01"/>
    <property type="gene ID" value="Os12g0154700"/>
</dbReference>
<dbReference type="KEGG" id="dosa:Os12g0154700"/>
<dbReference type="eggNOG" id="ENOG502QQ4A">
    <property type="taxonomic scope" value="Eukaryota"/>
</dbReference>
<dbReference type="HOGENOM" id="CLU_015790_0_0_1"/>
<dbReference type="InParanoid" id="Q2QXJ4"/>
<dbReference type="OMA" id="INVMKLT"/>
<dbReference type="OrthoDB" id="1921208at2759"/>
<dbReference type="Proteomes" id="UP000000763">
    <property type="component" value="Chromosome 12"/>
</dbReference>
<dbReference type="Proteomes" id="UP000007752">
    <property type="component" value="Chromosome 12"/>
</dbReference>
<dbReference type="Proteomes" id="UP000059680">
    <property type="component" value="Chromosome 12"/>
</dbReference>
<dbReference type="GO" id="GO:0048046">
    <property type="term" value="C:apoplast"/>
    <property type="evidence" value="ECO:0007669"/>
    <property type="project" value="UniProtKB-SubCell"/>
</dbReference>
<dbReference type="GO" id="GO:0030145">
    <property type="term" value="F:manganese ion binding"/>
    <property type="evidence" value="ECO:0007669"/>
    <property type="project" value="InterPro"/>
</dbReference>
<dbReference type="CDD" id="cd02241">
    <property type="entry name" value="cupin_OxOx"/>
    <property type="match status" value="1"/>
</dbReference>
<dbReference type="FunFam" id="2.60.120.10:FF:000005">
    <property type="entry name" value="Germin-like protein subfamily 1 member 8"/>
    <property type="match status" value="1"/>
</dbReference>
<dbReference type="Gene3D" id="2.60.120.10">
    <property type="entry name" value="Jelly Rolls"/>
    <property type="match status" value="1"/>
</dbReference>
<dbReference type="InterPro" id="IPR006045">
    <property type="entry name" value="Cupin_1"/>
</dbReference>
<dbReference type="InterPro" id="IPR001929">
    <property type="entry name" value="Germin"/>
</dbReference>
<dbReference type="InterPro" id="IPR019780">
    <property type="entry name" value="Germin_Mn-BS"/>
</dbReference>
<dbReference type="InterPro" id="IPR014710">
    <property type="entry name" value="RmlC-like_jellyroll"/>
</dbReference>
<dbReference type="InterPro" id="IPR011051">
    <property type="entry name" value="RmlC_Cupin_sf"/>
</dbReference>
<dbReference type="PANTHER" id="PTHR31238">
    <property type="entry name" value="GERMIN-LIKE PROTEIN SUBFAMILY 3 MEMBER 3"/>
    <property type="match status" value="1"/>
</dbReference>
<dbReference type="Pfam" id="PF00190">
    <property type="entry name" value="Cupin_1"/>
    <property type="match status" value="1"/>
</dbReference>
<dbReference type="PRINTS" id="PR00325">
    <property type="entry name" value="GERMIN"/>
</dbReference>
<dbReference type="SMART" id="SM00835">
    <property type="entry name" value="Cupin_1"/>
    <property type="match status" value="1"/>
</dbReference>
<dbReference type="SUPFAM" id="SSF51182">
    <property type="entry name" value="RmlC-like cupins"/>
    <property type="match status" value="1"/>
</dbReference>
<dbReference type="PROSITE" id="PS00725">
    <property type="entry name" value="GERMIN"/>
    <property type="match status" value="1"/>
</dbReference>
<feature type="signal peptide" evidence="2">
    <location>
        <begin position="1"/>
        <end position="22"/>
    </location>
</feature>
<feature type="chain" id="PRO_0000365531" description="Germin-like protein 12-1">
    <location>
        <begin position="23"/>
        <end position="229"/>
    </location>
</feature>
<feature type="domain" description="Cupin type-1" evidence="2">
    <location>
        <begin position="62"/>
        <end position="217"/>
    </location>
</feature>
<feature type="binding site" evidence="1">
    <location>
        <position position="111"/>
    </location>
    <ligand>
        <name>Mn(2+)</name>
        <dbReference type="ChEBI" id="CHEBI:29035"/>
    </ligand>
</feature>
<feature type="binding site" evidence="1">
    <location>
        <position position="113"/>
    </location>
    <ligand>
        <name>Mn(2+)</name>
        <dbReference type="ChEBI" id="CHEBI:29035"/>
    </ligand>
</feature>
<feature type="binding site" evidence="1">
    <location>
        <position position="118"/>
    </location>
    <ligand>
        <name>Mn(2+)</name>
        <dbReference type="ChEBI" id="CHEBI:29035"/>
    </ligand>
</feature>
<feature type="binding site" evidence="1">
    <location>
        <position position="162"/>
    </location>
    <ligand>
        <name>Mn(2+)</name>
        <dbReference type="ChEBI" id="CHEBI:29035"/>
    </ligand>
</feature>
<feature type="glycosylation site" description="N-linked (GlcNAc...) asparagine" evidence="2">
    <location>
        <position position="78"/>
    </location>
</feature>
<feature type="disulfide bond" evidence="1">
    <location>
        <begin position="32"/>
        <end position="47"/>
    </location>
</feature>
<name>GL121_ORYSJ</name>
<organism>
    <name type="scientific">Oryza sativa subsp. japonica</name>
    <name type="common">Rice</name>
    <dbReference type="NCBI Taxonomy" id="39947"/>
    <lineage>
        <taxon>Eukaryota</taxon>
        <taxon>Viridiplantae</taxon>
        <taxon>Streptophyta</taxon>
        <taxon>Embryophyta</taxon>
        <taxon>Tracheophyta</taxon>
        <taxon>Spermatophyta</taxon>
        <taxon>Magnoliopsida</taxon>
        <taxon>Liliopsida</taxon>
        <taxon>Poales</taxon>
        <taxon>Poaceae</taxon>
        <taxon>BOP clade</taxon>
        <taxon>Oryzoideae</taxon>
        <taxon>Oryzeae</taxon>
        <taxon>Oryzinae</taxon>
        <taxon>Oryza</taxon>
        <taxon>Oryza sativa</taxon>
    </lineage>
</organism>
<gene>
    <name type="ordered locus">Os12g0154700</name>
    <name type="ordered locus">LOC_Os12g05840</name>
    <name type="ORF">OsJ_033897</name>
</gene>